<name>PYRF_FLAJ1</name>
<organism>
    <name type="scientific">Flavobacterium johnsoniae (strain ATCC 17061 / DSM 2064 / JCM 8514 / BCRC 14874 / CCUG 350202 / NBRC 14942 / NCIMB 11054 / UW101)</name>
    <name type="common">Cytophaga johnsonae</name>
    <dbReference type="NCBI Taxonomy" id="376686"/>
    <lineage>
        <taxon>Bacteria</taxon>
        <taxon>Pseudomonadati</taxon>
        <taxon>Bacteroidota</taxon>
        <taxon>Flavobacteriia</taxon>
        <taxon>Flavobacteriales</taxon>
        <taxon>Flavobacteriaceae</taxon>
        <taxon>Flavobacterium</taxon>
    </lineage>
</organism>
<dbReference type="EC" id="4.1.1.23" evidence="1"/>
<dbReference type="EMBL" id="CP000685">
    <property type="protein sequence ID" value="ABQ05349.1"/>
    <property type="molecule type" value="Genomic_DNA"/>
</dbReference>
<dbReference type="RefSeq" id="WP_012024388.1">
    <property type="nucleotide sequence ID" value="NC_009441.1"/>
</dbReference>
<dbReference type="SMR" id="A5FHG4"/>
<dbReference type="STRING" id="376686.Fjoh_2322"/>
<dbReference type="KEGG" id="fjo:Fjoh_2322"/>
<dbReference type="eggNOG" id="COG0284">
    <property type="taxonomic scope" value="Bacteria"/>
</dbReference>
<dbReference type="HOGENOM" id="CLU_060704_1_0_10"/>
<dbReference type="OrthoDB" id="9808470at2"/>
<dbReference type="UniPathway" id="UPA00070">
    <property type="reaction ID" value="UER00120"/>
</dbReference>
<dbReference type="Proteomes" id="UP000006694">
    <property type="component" value="Chromosome"/>
</dbReference>
<dbReference type="GO" id="GO:0004590">
    <property type="term" value="F:orotidine-5'-phosphate decarboxylase activity"/>
    <property type="evidence" value="ECO:0007669"/>
    <property type="project" value="UniProtKB-UniRule"/>
</dbReference>
<dbReference type="GO" id="GO:0006207">
    <property type="term" value="P:'de novo' pyrimidine nucleobase biosynthetic process"/>
    <property type="evidence" value="ECO:0007669"/>
    <property type="project" value="InterPro"/>
</dbReference>
<dbReference type="GO" id="GO:0044205">
    <property type="term" value="P:'de novo' UMP biosynthetic process"/>
    <property type="evidence" value="ECO:0007669"/>
    <property type="project" value="UniProtKB-UniRule"/>
</dbReference>
<dbReference type="CDD" id="cd04725">
    <property type="entry name" value="OMP_decarboxylase_like"/>
    <property type="match status" value="1"/>
</dbReference>
<dbReference type="FunFam" id="3.20.20.70:FF:000157">
    <property type="entry name" value="Orotidine 5'-phosphate decarboxylase"/>
    <property type="match status" value="1"/>
</dbReference>
<dbReference type="Gene3D" id="3.20.20.70">
    <property type="entry name" value="Aldolase class I"/>
    <property type="match status" value="1"/>
</dbReference>
<dbReference type="HAMAP" id="MF_01215">
    <property type="entry name" value="OMPdecase_type2"/>
    <property type="match status" value="1"/>
</dbReference>
<dbReference type="InterPro" id="IPR013785">
    <property type="entry name" value="Aldolase_TIM"/>
</dbReference>
<dbReference type="InterPro" id="IPR011995">
    <property type="entry name" value="OMPdecase_type-2"/>
</dbReference>
<dbReference type="InterPro" id="IPR001754">
    <property type="entry name" value="OMPdeCOase_dom"/>
</dbReference>
<dbReference type="InterPro" id="IPR011060">
    <property type="entry name" value="RibuloseP-bd_barrel"/>
</dbReference>
<dbReference type="NCBIfam" id="TIGR02127">
    <property type="entry name" value="pyrF_sub2"/>
    <property type="match status" value="1"/>
</dbReference>
<dbReference type="PANTHER" id="PTHR43375">
    <property type="entry name" value="OROTIDINE 5'-PHOSPHATE DECARBOXYLASE"/>
    <property type="match status" value="1"/>
</dbReference>
<dbReference type="PANTHER" id="PTHR43375:SF1">
    <property type="entry name" value="OROTIDINE 5'-PHOSPHATE DECARBOXYLASE"/>
    <property type="match status" value="1"/>
</dbReference>
<dbReference type="Pfam" id="PF00215">
    <property type="entry name" value="OMPdecase"/>
    <property type="match status" value="1"/>
</dbReference>
<dbReference type="SMART" id="SM00934">
    <property type="entry name" value="OMPdecase"/>
    <property type="match status" value="1"/>
</dbReference>
<dbReference type="SUPFAM" id="SSF51366">
    <property type="entry name" value="Ribulose-phoshate binding barrel"/>
    <property type="match status" value="1"/>
</dbReference>
<keyword id="KW-0210">Decarboxylase</keyword>
<keyword id="KW-0456">Lyase</keyword>
<keyword id="KW-0665">Pyrimidine biosynthesis</keyword>
<proteinExistence type="inferred from homology"/>
<feature type="chain" id="PRO_1000138951" description="Orotidine 5'-phosphate decarboxylase">
    <location>
        <begin position="1"/>
        <end position="273"/>
    </location>
</feature>
<feature type="active site" description="Proton donor" evidence="1">
    <location>
        <position position="96"/>
    </location>
</feature>
<comment type="catalytic activity">
    <reaction evidence="1">
        <text>orotidine 5'-phosphate + H(+) = UMP + CO2</text>
        <dbReference type="Rhea" id="RHEA:11596"/>
        <dbReference type="ChEBI" id="CHEBI:15378"/>
        <dbReference type="ChEBI" id="CHEBI:16526"/>
        <dbReference type="ChEBI" id="CHEBI:57538"/>
        <dbReference type="ChEBI" id="CHEBI:57865"/>
        <dbReference type="EC" id="4.1.1.23"/>
    </reaction>
</comment>
<comment type="pathway">
    <text evidence="1">Pyrimidine metabolism; UMP biosynthesis via de novo pathway; UMP from orotate: step 2/2.</text>
</comment>
<comment type="similarity">
    <text evidence="1">Belongs to the OMP decarboxylase family. Type 2 subfamily.</text>
</comment>
<reference key="1">
    <citation type="journal article" date="2009" name="Appl. Environ. Microbiol.">
        <title>Novel features of the polysaccharide-digesting gliding bacterium Flavobacterium johnsoniae as revealed by genome sequence analysis.</title>
        <authorList>
            <person name="McBride M.J."/>
            <person name="Xie G."/>
            <person name="Martens E.C."/>
            <person name="Lapidus A."/>
            <person name="Henrissat B."/>
            <person name="Rhodes R.G."/>
            <person name="Goltsman E."/>
            <person name="Wang W."/>
            <person name="Xu J."/>
            <person name="Hunnicutt D.W."/>
            <person name="Staroscik A.M."/>
            <person name="Hoover T.R."/>
            <person name="Cheng Y.Q."/>
            <person name="Stein J.L."/>
        </authorList>
    </citation>
    <scope>NUCLEOTIDE SEQUENCE [LARGE SCALE GENOMIC DNA]</scope>
    <source>
        <strain>ATCC 17061 / DSM 2064 / JCM 8514 / BCRC 14874 / CCUG 350202 / NBRC 14942 / NCIMB 11054 / UW101</strain>
    </source>
</reference>
<protein>
    <recommendedName>
        <fullName evidence="1">Orotidine 5'-phosphate decarboxylase</fullName>
        <ecNumber evidence="1">4.1.1.23</ecNumber>
    </recommendedName>
    <alternativeName>
        <fullName evidence="1">OMP decarboxylase</fullName>
        <shortName evidence="1">OMPDCase</shortName>
        <shortName evidence="1">OMPdecase</shortName>
    </alternativeName>
</protein>
<evidence type="ECO:0000255" key="1">
    <source>
        <dbReference type="HAMAP-Rule" id="MF_01215"/>
    </source>
</evidence>
<gene>
    <name evidence="1" type="primary">pyrF</name>
    <name type="ordered locus">Fjoh_2322</name>
</gene>
<accession>A5FHG4</accession>
<sequence length="273" mass="30486">MTTQQLHEQILQKKSFLCVGLDPDLSKIPAHLLETEDPIFEFNKAIIDATHDLTVGYKPNTAFFEAYGIKGWMSLQKTINYINENYPDIFTIADAKRGDIGNTSSMYAKAFFEDLNFDSVTVAPYMGKDSVEPFLAFENKHTIMLALTSNEGAFDFQTLNTNGTELYKQVLETSKTWKNSQNLMYVVGATKAEYFADIRKIVPDSFLLVPGIGAQGGSLSEVCKYGMNDKIGLLVNSARAIIYASKGTDFAEKAREEALKVQQEMAEIIDSKF</sequence>